<feature type="chain" id="PRO_0000144882" description="L-aspartate dehydrogenase 3">
    <location>
        <begin position="1"/>
        <end position="272"/>
    </location>
</feature>
<feature type="active site" evidence="1">
    <location>
        <position position="224"/>
    </location>
</feature>
<feature type="binding site" evidence="1">
    <location>
        <position position="126"/>
    </location>
    <ligand>
        <name>NAD(+)</name>
        <dbReference type="ChEBI" id="CHEBI:57540"/>
    </ligand>
</feature>
<feature type="binding site" evidence="1">
    <location>
        <position position="194"/>
    </location>
    <ligand>
        <name>NAD(+)</name>
        <dbReference type="ChEBI" id="CHEBI:57540"/>
    </ligand>
</feature>
<keyword id="KW-0520">NAD</keyword>
<keyword id="KW-0521">NADP</keyword>
<keyword id="KW-0560">Oxidoreductase</keyword>
<keyword id="KW-0662">Pyridine nucleotide biosynthesis</keyword>
<accession>Q7WE57</accession>
<sequence length="272" mass="28270">MSSREELGVAVAGLGAIGKALANRLARNEVAGCRLSAVSGRDPGRTADFIASLPRPVPAVPLHELPRHADIVVECAPAAVLPQIVEPVLDAGKKVIVLSVGALLEFPELFRKAGSSDGQILVPTGALLGLDAVTAAAEGRIESVKMVSRKPPIGFKGAPILAERNLDIDGLTEPLLLYSGSARAAARGFPANLNVAVALSLAGIGPDETQLEVWADPGVVRNTHTIEVVSDAALLRMTIENIPSENPKTGRITAQSVMAMLRKMSAPVRVGT</sequence>
<gene>
    <name evidence="1" type="primary">nadX3</name>
    <name type="ordered locus">BB4781</name>
</gene>
<name>ASPD3_BORBR</name>
<proteinExistence type="inferred from homology"/>
<protein>
    <recommendedName>
        <fullName evidence="1">L-aspartate dehydrogenase 3</fullName>
        <ecNumber evidence="1">1.4.1.21</ecNumber>
    </recommendedName>
</protein>
<organism>
    <name type="scientific">Bordetella bronchiseptica (strain ATCC BAA-588 / NCTC 13252 / RB50)</name>
    <name type="common">Alcaligenes bronchisepticus</name>
    <dbReference type="NCBI Taxonomy" id="257310"/>
    <lineage>
        <taxon>Bacteria</taxon>
        <taxon>Pseudomonadati</taxon>
        <taxon>Pseudomonadota</taxon>
        <taxon>Betaproteobacteria</taxon>
        <taxon>Burkholderiales</taxon>
        <taxon>Alcaligenaceae</taxon>
        <taxon>Bordetella</taxon>
    </lineage>
</organism>
<dbReference type="EC" id="1.4.1.21" evidence="1"/>
<dbReference type="EMBL" id="BX640451">
    <property type="protein sequence ID" value="CAE35144.1"/>
    <property type="molecule type" value="Genomic_DNA"/>
</dbReference>
<dbReference type="RefSeq" id="WP_003815666.1">
    <property type="nucleotide sequence ID" value="NC_002927.3"/>
</dbReference>
<dbReference type="SMR" id="Q7WE57"/>
<dbReference type="KEGG" id="bbr:BB4781"/>
<dbReference type="eggNOG" id="COG1712">
    <property type="taxonomic scope" value="Bacteria"/>
</dbReference>
<dbReference type="HOGENOM" id="CLU_089550_0_0_4"/>
<dbReference type="UniPathway" id="UPA00253">
    <property type="reaction ID" value="UER00456"/>
</dbReference>
<dbReference type="Proteomes" id="UP000001027">
    <property type="component" value="Chromosome"/>
</dbReference>
<dbReference type="GO" id="GO:0033735">
    <property type="term" value="F:aspartate dehydrogenase activity"/>
    <property type="evidence" value="ECO:0007669"/>
    <property type="project" value="UniProtKB-EC"/>
</dbReference>
<dbReference type="GO" id="GO:0051287">
    <property type="term" value="F:NAD binding"/>
    <property type="evidence" value="ECO:0007669"/>
    <property type="project" value="UniProtKB-UniRule"/>
</dbReference>
<dbReference type="GO" id="GO:0050661">
    <property type="term" value="F:NADP binding"/>
    <property type="evidence" value="ECO:0007669"/>
    <property type="project" value="UniProtKB-UniRule"/>
</dbReference>
<dbReference type="GO" id="GO:0016639">
    <property type="term" value="F:oxidoreductase activity, acting on the CH-NH2 group of donors, NAD or NADP as acceptor"/>
    <property type="evidence" value="ECO:0007669"/>
    <property type="project" value="UniProtKB-UniRule"/>
</dbReference>
<dbReference type="GO" id="GO:0009435">
    <property type="term" value="P:NAD biosynthetic process"/>
    <property type="evidence" value="ECO:0007669"/>
    <property type="project" value="UniProtKB-UniRule"/>
</dbReference>
<dbReference type="Gene3D" id="3.30.360.10">
    <property type="entry name" value="Dihydrodipicolinate Reductase, domain 2"/>
    <property type="match status" value="1"/>
</dbReference>
<dbReference type="Gene3D" id="3.40.50.720">
    <property type="entry name" value="NAD(P)-binding Rossmann-like Domain"/>
    <property type="match status" value="1"/>
</dbReference>
<dbReference type="HAMAP" id="MF_01265">
    <property type="entry name" value="NadX"/>
    <property type="match status" value="1"/>
</dbReference>
<dbReference type="InterPro" id="IPR005106">
    <property type="entry name" value="Asp/hSer_DH_NAD-bd"/>
</dbReference>
<dbReference type="InterPro" id="IPR002811">
    <property type="entry name" value="Asp_DH"/>
</dbReference>
<dbReference type="InterPro" id="IPR020626">
    <property type="entry name" value="Asp_DH_prok"/>
</dbReference>
<dbReference type="InterPro" id="IPR011182">
    <property type="entry name" value="L-Asp_DH"/>
</dbReference>
<dbReference type="InterPro" id="IPR036291">
    <property type="entry name" value="NAD(P)-bd_dom_sf"/>
</dbReference>
<dbReference type="NCBIfam" id="NF009825">
    <property type="entry name" value="PRK13302.1"/>
    <property type="match status" value="1"/>
</dbReference>
<dbReference type="PANTHER" id="PTHR31873:SF6">
    <property type="entry name" value="ASPARTATE DEHYDROGENASE DOMAIN-CONTAINING PROTEIN"/>
    <property type="match status" value="1"/>
</dbReference>
<dbReference type="PANTHER" id="PTHR31873">
    <property type="entry name" value="L-ASPARTATE DEHYDROGENASE-RELATED"/>
    <property type="match status" value="1"/>
</dbReference>
<dbReference type="Pfam" id="PF01958">
    <property type="entry name" value="Asp_DH_C"/>
    <property type="match status" value="1"/>
</dbReference>
<dbReference type="Pfam" id="PF03447">
    <property type="entry name" value="NAD_binding_3"/>
    <property type="match status" value="1"/>
</dbReference>
<dbReference type="PIRSF" id="PIRSF005227">
    <property type="entry name" value="Asp_dh_NAD_syn"/>
    <property type="match status" value="1"/>
</dbReference>
<dbReference type="SUPFAM" id="SSF55347">
    <property type="entry name" value="Glyceraldehyde-3-phosphate dehydrogenase-like, C-terminal domain"/>
    <property type="match status" value="1"/>
</dbReference>
<dbReference type="SUPFAM" id="SSF51735">
    <property type="entry name" value="NAD(P)-binding Rossmann-fold domains"/>
    <property type="match status" value="1"/>
</dbReference>
<reference key="1">
    <citation type="journal article" date="2003" name="Nat. Genet.">
        <title>Comparative analysis of the genome sequences of Bordetella pertussis, Bordetella parapertussis and Bordetella bronchiseptica.</title>
        <authorList>
            <person name="Parkhill J."/>
            <person name="Sebaihia M."/>
            <person name="Preston A."/>
            <person name="Murphy L.D."/>
            <person name="Thomson N.R."/>
            <person name="Harris D.E."/>
            <person name="Holden M.T.G."/>
            <person name="Churcher C.M."/>
            <person name="Bentley S.D."/>
            <person name="Mungall K.L."/>
            <person name="Cerdeno-Tarraga A.-M."/>
            <person name="Temple L."/>
            <person name="James K.D."/>
            <person name="Harris B."/>
            <person name="Quail M.A."/>
            <person name="Achtman M."/>
            <person name="Atkin R."/>
            <person name="Baker S."/>
            <person name="Basham D."/>
            <person name="Bason N."/>
            <person name="Cherevach I."/>
            <person name="Chillingworth T."/>
            <person name="Collins M."/>
            <person name="Cronin A."/>
            <person name="Davis P."/>
            <person name="Doggett J."/>
            <person name="Feltwell T."/>
            <person name="Goble A."/>
            <person name="Hamlin N."/>
            <person name="Hauser H."/>
            <person name="Holroyd S."/>
            <person name="Jagels K."/>
            <person name="Leather S."/>
            <person name="Moule S."/>
            <person name="Norberczak H."/>
            <person name="O'Neil S."/>
            <person name="Ormond D."/>
            <person name="Price C."/>
            <person name="Rabbinowitsch E."/>
            <person name="Rutter S."/>
            <person name="Sanders M."/>
            <person name="Saunders D."/>
            <person name="Seeger K."/>
            <person name="Sharp S."/>
            <person name="Simmonds M."/>
            <person name="Skelton J."/>
            <person name="Squares R."/>
            <person name="Squares S."/>
            <person name="Stevens K."/>
            <person name="Unwin L."/>
            <person name="Whitehead S."/>
            <person name="Barrell B.G."/>
            <person name="Maskell D.J."/>
        </authorList>
    </citation>
    <scope>NUCLEOTIDE SEQUENCE [LARGE SCALE GENOMIC DNA]</scope>
    <source>
        <strain>ATCC BAA-588 / NCTC 13252 / RB50</strain>
    </source>
</reference>
<evidence type="ECO:0000255" key="1">
    <source>
        <dbReference type="HAMAP-Rule" id="MF_01265"/>
    </source>
</evidence>
<comment type="function">
    <text evidence="1">Specifically catalyzes the NAD or NADP-dependent dehydrogenation of L-aspartate to iminoaspartate.</text>
</comment>
<comment type="catalytic activity">
    <reaction evidence="1">
        <text>L-aspartate + NADP(+) + H2O = oxaloacetate + NH4(+) + NADPH + H(+)</text>
        <dbReference type="Rhea" id="RHEA:11784"/>
        <dbReference type="ChEBI" id="CHEBI:15377"/>
        <dbReference type="ChEBI" id="CHEBI:15378"/>
        <dbReference type="ChEBI" id="CHEBI:16452"/>
        <dbReference type="ChEBI" id="CHEBI:28938"/>
        <dbReference type="ChEBI" id="CHEBI:29991"/>
        <dbReference type="ChEBI" id="CHEBI:57783"/>
        <dbReference type="ChEBI" id="CHEBI:58349"/>
        <dbReference type="EC" id="1.4.1.21"/>
    </reaction>
</comment>
<comment type="catalytic activity">
    <reaction evidence="1">
        <text>L-aspartate + NAD(+) + H2O = oxaloacetate + NH4(+) + NADH + H(+)</text>
        <dbReference type="Rhea" id="RHEA:11788"/>
        <dbReference type="ChEBI" id="CHEBI:15377"/>
        <dbReference type="ChEBI" id="CHEBI:15378"/>
        <dbReference type="ChEBI" id="CHEBI:16452"/>
        <dbReference type="ChEBI" id="CHEBI:28938"/>
        <dbReference type="ChEBI" id="CHEBI:29991"/>
        <dbReference type="ChEBI" id="CHEBI:57540"/>
        <dbReference type="ChEBI" id="CHEBI:57945"/>
        <dbReference type="EC" id="1.4.1.21"/>
    </reaction>
</comment>
<comment type="pathway">
    <text evidence="1">Cofactor biosynthesis; NAD(+) biosynthesis; iminoaspartate from L-aspartate (dehydrogenase route): step 1/1.</text>
</comment>
<comment type="miscellaneous">
    <text evidence="1">The iminoaspartate product is unstable in aqueous solution and can decompose to oxaloacetate and ammonia.</text>
</comment>
<comment type="similarity">
    <text evidence="1">Belongs to the L-aspartate dehydrogenase family.</text>
</comment>